<evidence type="ECO:0000250" key="1">
    <source>
        <dbReference type="UniProtKB" id="P19880"/>
    </source>
</evidence>
<evidence type="ECO:0000255" key="2">
    <source>
        <dbReference type="PROSITE-ProRule" id="PRU00768"/>
    </source>
</evidence>
<evidence type="ECO:0000255" key="3">
    <source>
        <dbReference type="PROSITE-ProRule" id="PRU00978"/>
    </source>
</evidence>
<evidence type="ECO:0000256" key="4">
    <source>
        <dbReference type="SAM" id="MobiDB-lite"/>
    </source>
</evidence>
<evidence type="ECO:0000269" key="5">
    <source>
    </source>
</evidence>
<evidence type="ECO:0000269" key="6">
    <source>
    </source>
</evidence>
<evidence type="ECO:0000303" key="7">
    <source>
    </source>
</evidence>
<evidence type="ECO:0000305" key="8"/>
<evidence type="ECO:0000305" key="9">
    <source>
    </source>
</evidence>
<comment type="function">
    <text evidence="1 5">Transcription activator involved in oxidative stress response, specifically during hyphal growth. Regulates the transcription of genes encoding antioxidant enzymes and components of the cellular thiol-reducing pathways including the mycelium-specific catalase catB (but not the conidia-specific catalase catA), thioredoxin reductase trxB and thioredoxin thiO (PubMed:17617701). Preferentially binds to promoters with the core binding site 5'-TTA[CG]TAA-3'. Activity of the transcription factor is controlled through oxidation of specific cysteine residues resulting in the alteration of its subcellular location. Activation by hydroperoxides induces nuclear accumulation and as a result NapA transcriptional activity (By similarity).</text>
</comment>
<comment type="subcellular location">
    <subcellularLocation>
        <location evidence="1">Nucleus</location>
    </subcellularLocation>
    <subcellularLocation>
        <location evidence="1">Cytoplasm</location>
    </subcellularLocation>
    <text evidence="1">Oxidized napA is found predominantly in the nucleus, while reduced napA is continuously exported to the cytoplasm by CRM1/exportin 1.</text>
</comment>
<comment type="domain">
    <text evidence="1 9">NapA contains a C-terminal cysteine rich domain (c-CRD), but lacks the N-terminal CRD (n-CRD) found in the yeast homolog YAP1. It probably also contains embedded in the c-CRD a nuclear export signal, with which the nuclear export protein CRM1 may interact in the absence of inter- or intramolecular disulfide bonds (or otherwise oxidized/modified cysteines) within the c-CRD.</text>
</comment>
<comment type="PTM">
    <text evidence="1">Oxidative stress induces conformational changes through oxidation of cysteine residues, masking the nuclear export signal, thus abolishing nuclear export by CRM1/exportin 1.</text>
</comment>
<comment type="disruption phenotype">
    <text evidence="6">Decreases the level of cutinase cut4 during oxidative stress.</text>
</comment>
<comment type="similarity">
    <text evidence="8">Belongs to the bZIP family. YAP subfamily.</text>
</comment>
<keyword id="KW-0963">Cytoplasm</keyword>
<keyword id="KW-0539">Nucleus</keyword>
<keyword id="KW-1185">Reference proteome</keyword>
<protein>
    <recommendedName>
        <fullName evidence="8">AP-1-like transcription factor napA</fullName>
    </recommendedName>
</protein>
<dbReference type="EMBL" id="BN001304">
    <property type="protein sequence ID" value="CBF79538.1"/>
    <property type="molecule type" value="Genomic_DNA"/>
</dbReference>
<dbReference type="RefSeq" id="XP_680782.1">
    <property type="nucleotide sequence ID" value="XM_675690.1"/>
</dbReference>
<dbReference type="SMR" id="Q5AW17"/>
<dbReference type="STRING" id="227321.Q5AW17"/>
<dbReference type="EnsemblFungi" id="CBF79538">
    <property type="protein sequence ID" value="CBF79538"/>
    <property type="gene ID" value="ANIA_07513"/>
</dbReference>
<dbReference type="GeneID" id="2869524"/>
<dbReference type="KEGG" id="ani:ANIA_07513"/>
<dbReference type="VEuPathDB" id="FungiDB:AN7513"/>
<dbReference type="eggNOG" id="ENOG502RPD7">
    <property type="taxonomic scope" value="Eukaryota"/>
</dbReference>
<dbReference type="HOGENOM" id="CLU_011807_0_0_1"/>
<dbReference type="InParanoid" id="Q5AW17"/>
<dbReference type="OMA" id="LNMACGN"/>
<dbReference type="OrthoDB" id="5380163at2759"/>
<dbReference type="Proteomes" id="UP000000560">
    <property type="component" value="Chromosome IV"/>
</dbReference>
<dbReference type="GO" id="GO:0005737">
    <property type="term" value="C:cytoplasm"/>
    <property type="evidence" value="ECO:0007669"/>
    <property type="project" value="UniProtKB-SubCell"/>
</dbReference>
<dbReference type="GO" id="GO:0005634">
    <property type="term" value="C:nucleus"/>
    <property type="evidence" value="ECO:0007669"/>
    <property type="project" value="UniProtKB-SubCell"/>
</dbReference>
<dbReference type="GO" id="GO:0005667">
    <property type="term" value="C:transcription regulator complex"/>
    <property type="evidence" value="ECO:0000318"/>
    <property type="project" value="GO_Central"/>
</dbReference>
<dbReference type="GO" id="GO:0000981">
    <property type="term" value="F:DNA-binding transcription factor activity, RNA polymerase II-specific"/>
    <property type="evidence" value="ECO:0000318"/>
    <property type="project" value="GO_Central"/>
</dbReference>
<dbReference type="GO" id="GO:0000978">
    <property type="term" value="F:RNA polymerase II cis-regulatory region sequence-specific DNA binding"/>
    <property type="evidence" value="ECO:0000318"/>
    <property type="project" value="GO_Central"/>
</dbReference>
<dbReference type="GO" id="GO:0030436">
    <property type="term" value="P:asexual sporulation"/>
    <property type="evidence" value="ECO:0000315"/>
    <property type="project" value="AspGD"/>
</dbReference>
<dbReference type="GO" id="GO:0036184">
    <property type="term" value="P:asperthecin biosynthetic process"/>
    <property type="evidence" value="ECO:0000315"/>
    <property type="project" value="AspGD"/>
</dbReference>
<dbReference type="GO" id="GO:0034599">
    <property type="term" value="P:cellular response to oxidative stress"/>
    <property type="evidence" value="ECO:0000315"/>
    <property type="project" value="AspGD"/>
</dbReference>
<dbReference type="GO" id="GO:1900766">
    <property type="term" value="P:emericellin biosynthetic process"/>
    <property type="evidence" value="ECO:0000315"/>
    <property type="project" value="AspGD"/>
</dbReference>
<dbReference type="GO" id="GO:1900380">
    <property type="term" value="P:negative regulation of asperthecin biosynthetic process"/>
    <property type="evidence" value="ECO:0000315"/>
    <property type="project" value="AspGD"/>
</dbReference>
<dbReference type="GO" id="GO:1900835">
    <property type="term" value="P:negative regulation of emericellin biosynthetic process"/>
    <property type="evidence" value="ECO:0000315"/>
    <property type="project" value="AspGD"/>
</dbReference>
<dbReference type="GO" id="GO:1900760">
    <property type="term" value="P:negative regulation of sterigmatocystin biosynthetic process"/>
    <property type="evidence" value="ECO:0000315"/>
    <property type="project" value="AspGD"/>
</dbReference>
<dbReference type="GO" id="GO:1903833">
    <property type="term" value="P:positive regulation of cellular response to amino acid starvation"/>
    <property type="evidence" value="ECO:0000318"/>
    <property type="project" value="GO_Central"/>
</dbReference>
<dbReference type="GO" id="GO:0045944">
    <property type="term" value="P:positive regulation of transcription by RNA polymerase II"/>
    <property type="evidence" value="ECO:0000318"/>
    <property type="project" value="GO_Central"/>
</dbReference>
<dbReference type="GO" id="GO:0043935">
    <property type="term" value="P:sexual sporulation resulting in formation of a cellular spore"/>
    <property type="evidence" value="ECO:0000315"/>
    <property type="project" value="AspGD"/>
</dbReference>
<dbReference type="GO" id="GO:1900793">
    <property type="term" value="P:shamixanthone biosynthetic process"/>
    <property type="evidence" value="ECO:0000315"/>
    <property type="project" value="AspGD"/>
</dbReference>
<dbReference type="GO" id="GO:0045461">
    <property type="term" value="P:sterigmatocystin biosynthetic process"/>
    <property type="evidence" value="ECO:0000315"/>
    <property type="project" value="AspGD"/>
</dbReference>
<dbReference type="CDD" id="cd14688">
    <property type="entry name" value="bZIP_YAP"/>
    <property type="match status" value="1"/>
</dbReference>
<dbReference type="FunFam" id="1.20.5.170:FF:000067">
    <property type="entry name" value="BZIP transcription factor"/>
    <property type="match status" value="1"/>
</dbReference>
<dbReference type="Gene3D" id="1.20.5.170">
    <property type="match status" value="1"/>
</dbReference>
<dbReference type="Gene3D" id="1.10.238.100">
    <property type="entry name" value="YAP1 redox domain. Chain B"/>
    <property type="match status" value="1"/>
</dbReference>
<dbReference type="InterPro" id="IPR050936">
    <property type="entry name" value="AP-1-like"/>
</dbReference>
<dbReference type="InterPro" id="IPR004827">
    <property type="entry name" value="bZIP"/>
</dbReference>
<dbReference type="InterPro" id="IPR046347">
    <property type="entry name" value="bZIP_sf"/>
</dbReference>
<dbReference type="InterPro" id="IPR013910">
    <property type="entry name" value="TF_PAP1"/>
</dbReference>
<dbReference type="InterPro" id="IPR023167">
    <property type="entry name" value="Yap1_redox_dom_sf"/>
</dbReference>
<dbReference type="PANTHER" id="PTHR40621:SF6">
    <property type="entry name" value="AP-1-LIKE TRANSCRIPTION FACTOR YAP1-RELATED"/>
    <property type="match status" value="1"/>
</dbReference>
<dbReference type="PANTHER" id="PTHR40621">
    <property type="entry name" value="TRANSCRIPTION FACTOR KAPC-RELATED"/>
    <property type="match status" value="1"/>
</dbReference>
<dbReference type="Pfam" id="PF00170">
    <property type="entry name" value="bZIP_1"/>
    <property type="match status" value="1"/>
</dbReference>
<dbReference type="Pfam" id="PF08601">
    <property type="entry name" value="PAP1"/>
    <property type="match status" value="1"/>
</dbReference>
<dbReference type="SMART" id="SM00338">
    <property type="entry name" value="BRLZ"/>
    <property type="match status" value="1"/>
</dbReference>
<dbReference type="SUPFAM" id="SSF57959">
    <property type="entry name" value="Leucine zipper domain"/>
    <property type="match status" value="1"/>
</dbReference>
<dbReference type="SUPFAM" id="SSF111430">
    <property type="entry name" value="YAP1 redox domain"/>
    <property type="match status" value="1"/>
</dbReference>
<dbReference type="PROSITE" id="PS50217">
    <property type="entry name" value="BZIP"/>
    <property type="match status" value="1"/>
</dbReference>
<dbReference type="PROSITE" id="PS00036">
    <property type="entry name" value="BZIP_BASIC"/>
    <property type="match status" value="1"/>
</dbReference>
<proteinExistence type="inferred from homology"/>
<accession>Q5AW17</accession>
<accession>C8VBJ8</accession>
<name>AP1_EMENI</name>
<sequence length="577" mass="63154">MADYNSLYQHGLYLSPDQQDLLLAALSSNNPPSKQKQNVQKPELGTNPTNTPGQASTGSFNTSPAFDGSHQFDNLNYDESPFLDFNPELEWDFPGSENLIGELPGSATSDDHEVGEKRKDSNSNGEVNGKKRRESDDKSDDKTSKKPGRKPLTSEPTSKRKAQNRAAQRAFRERKEKHLKDLEAKVEELQKASDSANQENGLLKAQVERLQVELREYRKRLSWVTQGNALSAINSYPGNANRMSGLNNNDFMFDFPKFGDLPGGRIFNGSVAKTNQNKKDDTPIPGILRHSALQAANGRASSSASPKTVTSNNPATKSPVTADGRLTSHTSSVYNYHQPGQGHDTSTSDSPSSSSDSHQFLSSSGTSPEPSVQSPDNQAKESHEGHTCTIDGEKSFCAQLGMACGNINNPIPAVRQRSESATNTPNAPSSTDNVPGIDFMAQQNGGQFDPLLFGDWREPQDAVLSQDFNTFFDDAFPLPDLGSPSHNLTEVGLGAQQKKSILEEMDNKEEEEVVPGEDKAQMLSCTKIWDRLQSMEKFRNGEIDVDNLCSELRTKARCSEGGVVVNQRDVDDIIGRV</sequence>
<reference key="1">
    <citation type="journal article" date="2005" name="Nature">
        <title>Sequencing of Aspergillus nidulans and comparative analysis with A. fumigatus and A. oryzae.</title>
        <authorList>
            <person name="Galagan J.E."/>
            <person name="Calvo S.E."/>
            <person name="Cuomo C."/>
            <person name="Ma L.-J."/>
            <person name="Wortman J.R."/>
            <person name="Batzoglou S."/>
            <person name="Lee S.-I."/>
            <person name="Bastuerkmen M."/>
            <person name="Spevak C.C."/>
            <person name="Clutterbuck J."/>
            <person name="Kapitonov V."/>
            <person name="Jurka J."/>
            <person name="Scazzocchio C."/>
            <person name="Farman M.L."/>
            <person name="Butler J."/>
            <person name="Purcell S."/>
            <person name="Harris S."/>
            <person name="Braus G.H."/>
            <person name="Draht O."/>
            <person name="Busch S."/>
            <person name="D'Enfert C."/>
            <person name="Bouchier C."/>
            <person name="Goldman G.H."/>
            <person name="Bell-Pedersen D."/>
            <person name="Griffiths-Jones S."/>
            <person name="Doonan J.H."/>
            <person name="Yu J."/>
            <person name="Vienken K."/>
            <person name="Pain A."/>
            <person name="Freitag M."/>
            <person name="Selker E.U."/>
            <person name="Archer D.B."/>
            <person name="Penalva M.A."/>
            <person name="Oakley B.R."/>
            <person name="Momany M."/>
            <person name="Tanaka T."/>
            <person name="Kumagai T."/>
            <person name="Asai K."/>
            <person name="Machida M."/>
            <person name="Nierman W.C."/>
            <person name="Denning D.W."/>
            <person name="Caddick M.X."/>
            <person name="Hynes M."/>
            <person name="Paoletti M."/>
            <person name="Fischer R."/>
            <person name="Miller B.L."/>
            <person name="Dyer P.S."/>
            <person name="Sachs M.S."/>
            <person name="Osmani S.A."/>
            <person name="Birren B.W."/>
        </authorList>
    </citation>
    <scope>NUCLEOTIDE SEQUENCE [LARGE SCALE GENOMIC DNA]</scope>
    <source>
        <strain>FGSC A4 / ATCC 38163 / CBS 112.46 / NRRL 194 / M139</strain>
    </source>
</reference>
<reference key="2">
    <citation type="journal article" date="2009" name="Fungal Genet. Biol.">
        <title>The 2008 update of the Aspergillus nidulans genome annotation: a community effort.</title>
        <authorList>
            <person name="Wortman J.R."/>
            <person name="Gilsenan J.M."/>
            <person name="Joardar V."/>
            <person name="Deegan J."/>
            <person name="Clutterbuck J."/>
            <person name="Andersen M.R."/>
            <person name="Archer D."/>
            <person name="Bencina M."/>
            <person name="Braus G."/>
            <person name="Coutinho P."/>
            <person name="von Dohren H."/>
            <person name="Doonan J."/>
            <person name="Driessen A.J."/>
            <person name="Durek P."/>
            <person name="Espeso E."/>
            <person name="Fekete E."/>
            <person name="Flipphi M."/>
            <person name="Estrada C.G."/>
            <person name="Geysens S."/>
            <person name="Goldman G."/>
            <person name="de Groot P.W."/>
            <person name="Hansen K."/>
            <person name="Harris S.D."/>
            <person name="Heinekamp T."/>
            <person name="Helmstaedt K."/>
            <person name="Henrissat B."/>
            <person name="Hofmann G."/>
            <person name="Homan T."/>
            <person name="Horio T."/>
            <person name="Horiuchi H."/>
            <person name="James S."/>
            <person name="Jones M."/>
            <person name="Karaffa L."/>
            <person name="Karanyi Z."/>
            <person name="Kato M."/>
            <person name="Keller N."/>
            <person name="Kelly D.E."/>
            <person name="Kiel J.A."/>
            <person name="Kim J.M."/>
            <person name="van der Klei I.J."/>
            <person name="Klis F.M."/>
            <person name="Kovalchuk A."/>
            <person name="Krasevec N."/>
            <person name="Kubicek C.P."/>
            <person name="Liu B."/>
            <person name="Maccabe A."/>
            <person name="Meyer V."/>
            <person name="Mirabito P."/>
            <person name="Miskei M."/>
            <person name="Mos M."/>
            <person name="Mullins J."/>
            <person name="Nelson D.R."/>
            <person name="Nielsen J."/>
            <person name="Oakley B.R."/>
            <person name="Osmani S.A."/>
            <person name="Pakula T."/>
            <person name="Paszewski A."/>
            <person name="Paulsen I."/>
            <person name="Pilsyk S."/>
            <person name="Pocsi I."/>
            <person name="Punt P.J."/>
            <person name="Ram A.F."/>
            <person name="Ren Q."/>
            <person name="Robellet X."/>
            <person name="Robson G."/>
            <person name="Seiboth B."/>
            <person name="van Solingen P."/>
            <person name="Specht T."/>
            <person name="Sun J."/>
            <person name="Taheri-Talesh N."/>
            <person name="Takeshita N."/>
            <person name="Ussery D."/>
            <person name="vanKuyk P.A."/>
            <person name="Visser H."/>
            <person name="van de Vondervoort P.J."/>
            <person name="de Vries R.P."/>
            <person name="Walton J."/>
            <person name="Xiang X."/>
            <person name="Xiong Y."/>
            <person name="Zeng A.P."/>
            <person name="Brandt B.W."/>
            <person name="Cornell M.J."/>
            <person name="van den Hondel C.A."/>
            <person name="Visser J."/>
            <person name="Oliver S.G."/>
            <person name="Turner G."/>
        </authorList>
    </citation>
    <scope>GENOME REANNOTATION</scope>
    <source>
        <strain>FGSC A4 / ATCC 38163 / CBS 112.46 / NRRL 194 / M139</strain>
    </source>
</reference>
<reference key="3">
    <citation type="journal article" date="2007" name="Biosci. Biotechnol. Biochem.">
        <title>Characterization of the bZip-type transcription factor NapA with reference to oxidative stress response in Aspergillus nidulans.</title>
        <authorList>
            <person name="Asano Y."/>
            <person name="Hagiwara D."/>
            <person name="Yamashino T."/>
            <person name="Mizuno T."/>
        </authorList>
    </citation>
    <scope>FUNCTION</scope>
</reference>
<reference key="4">
    <citation type="journal article" date="2008" name="Biosci. Biotechnol. Biochem.">
        <title>Characterization of bZip-type transcription factor AtfA with reference to stress responses of conidia of Aspergillus nidulans.</title>
        <authorList>
            <person name="Hagiwara D."/>
            <person name="Asano Y."/>
            <person name="Yamashino T."/>
            <person name="Mizuno T."/>
        </authorList>
    </citation>
    <scope>FUNCTION</scope>
</reference>
<reference key="5">
    <citation type="journal article" date="2019" name="Appl. Microbiol. Biotechnol.">
        <title>Regulation of the cutinases expressed by Aspergillus nidulans and evaluation of their role in cutin degradation.</title>
        <authorList>
            <person name="Bermudez-Garcia E."/>
            <person name="Pena-Montes C."/>
            <person name="Martins I."/>
            <person name="Pais J."/>
            <person name="Pereira C.S."/>
            <person name="Sanchez S."/>
            <person name="Farres A."/>
        </authorList>
    </citation>
    <scope>DISRUPTION PHENOTYPE</scope>
</reference>
<gene>
    <name evidence="7" type="primary">napA</name>
    <name type="ORF">ANIA_07513</name>
</gene>
<feature type="chain" id="PRO_0000441070" description="AP-1-like transcription factor napA">
    <location>
        <begin position="1"/>
        <end position="577"/>
    </location>
</feature>
<feature type="domain" description="bZIP" evidence="3">
    <location>
        <begin position="154"/>
        <end position="217"/>
    </location>
</feature>
<feature type="region of interest" description="Disordered" evidence="4">
    <location>
        <begin position="25"/>
        <end position="178"/>
    </location>
</feature>
<feature type="region of interest" description="Basic motif" evidence="3">
    <location>
        <begin position="159"/>
        <end position="180"/>
    </location>
</feature>
<feature type="region of interest" description="Leucine-zipper" evidence="3">
    <location>
        <begin position="182"/>
        <end position="189"/>
    </location>
</feature>
<feature type="region of interest" description="Disordered" evidence="4">
    <location>
        <begin position="294"/>
        <end position="386"/>
    </location>
</feature>
<feature type="region of interest" description="c-CRD" evidence="1">
    <location>
        <begin position="525"/>
        <end position="558"/>
    </location>
</feature>
<feature type="short sequence motif" description="Bipartite nuclear localization signal" evidence="2">
    <location>
        <begin position="117"/>
        <end position="124"/>
    </location>
</feature>
<feature type="short sequence motif" description="Bipartite nuclear localization signal" evidence="2">
    <location>
        <begin position="144"/>
        <end position="151"/>
    </location>
</feature>
<feature type="short sequence motif" description="Nuclear export signal" evidence="1">
    <location>
        <begin position="543"/>
        <end position="550"/>
    </location>
</feature>
<feature type="compositionally biased region" description="Polar residues" evidence="4">
    <location>
        <begin position="26"/>
        <end position="64"/>
    </location>
</feature>
<feature type="compositionally biased region" description="Basic and acidic residues" evidence="4">
    <location>
        <begin position="109"/>
        <end position="121"/>
    </location>
</feature>
<feature type="compositionally biased region" description="Basic and acidic residues" evidence="4">
    <location>
        <begin position="133"/>
        <end position="144"/>
    </location>
</feature>
<feature type="compositionally biased region" description="Polar residues" evidence="4">
    <location>
        <begin position="299"/>
        <end position="319"/>
    </location>
</feature>
<feature type="compositionally biased region" description="Low complexity" evidence="4">
    <location>
        <begin position="347"/>
        <end position="364"/>
    </location>
</feature>
<feature type="compositionally biased region" description="Polar residues" evidence="4">
    <location>
        <begin position="365"/>
        <end position="377"/>
    </location>
</feature>
<organism>
    <name type="scientific">Emericella nidulans (strain FGSC A4 / ATCC 38163 / CBS 112.46 / NRRL 194 / M139)</name>
    <name type="common">Aspergillus nidulans</name>
    <dbReference type="NCBI Taxonomy" id="227321"/>
    <lineage>
        <taxon>Eukaryota</taxon>
        <taxon>Fungi</taxon>
        <taxon>Dikarya</taxon>
        <taxon>Ascomycota</taxon>
        <taxon>Pezizomycotina</taxon>
        <taxon>Eurotiomycetes</taxon>
        <taxon>Eurotiomycetidae</taxon>
        <taxon>Eurotiales</taxon>
        <taxon>Aspergillaceae</taxon>
        <taxon>Aspergillus</taxon>
        <taxon>Aspergillus subgen. Nidulantes</taxon>
    </lineage>
</organism>